<evidence type="ECO:0000250" key="1"/>
<evidence type="ECO:0000269" key="2">
    <source>
    </source>
</evidence>
<evidence type="ECO:0000303" key="3">
    <source>
    </source>
</evidence>
<evidence type="ECO:0000305" key="4"/>
<proteinExistence type="evidence at transcript level"/>
<protein>
    <recommendedName>
        <fullName>Ent-kaurene synthase-like 3</fullName>
        <shortName>OsKS3</shortName>
        <shortName>OsKSL3</shortName>
        <ecNumber>4.2.3.-</ecNumber>
    </recommendedName>
    <alternativeName>
        <fullName>Ent-kaurene synthase-like 2</fullName>
        <shortName>OsKS2</shortName>
    </alternativeName>
</protein>
<dbReference type="EC" id="4.2.3.-"/>
<dbReference type="EMBL" id="AY347879">
    <property type="protein sequence ID" value="AAQ72562.1"/>
    <property type="molecule type" value="mRNA"/>
</dbReference>
<dbReference type="EMBL" id="AL731610">
    <property type="protein sequence ID" value="CAE05199.3"/>
    <property type="status" value="ALT_SEQ"/>
    <property type="molecule type" value="Genomic_DNA"/>
</dbReference>
<dbReference type="EMBL" id="AP008210">
    <property type="protein sequence ID" value="BAF15754.1"/>
    <property type="molecule type" value="Genomic_DNA"/>
</dbReference>
<dbReference type="EMBL" id="AP014960">
    <property type="protein sequence ID" value="BAS90961.1"/>
    <property type="molecule type" value="Genomic_DNA"/>
</dbReference>
<dbReference type="EMBL" id="AB243669">
    <property type="protein sequence ID" value="BAE98301.1"/>
    <property type="molecule type" value="mRNA"/>
</dbReference>
<dbReference type="SMR" id="Q0JA83"/>
<dbReference type="FunCoup" id="Q0JA83">
    <property type="interactions" value="190"/>
</dbReference>
<dbReference type="STRING" id="39947.Q0JA83"/>
<dbReference type="PaxDb" id="39947-Q0JA83"/>
<dbReference type="EnsemblPlants" id="Os04t0611700-00">
    <molecule id="Q0JA83-1"/>
    <property type="protein sequence ID" value="Os04t0611700-00"/>
    <property type="gene ID" value="Os04g0611700"/>
</dbReference>
<dbReference type="Gramene" id="Os04t0611700-00">
    <molecule id="Q0JA83-1"/>
    <property type="protein sequence ID" value="Os04t0611700-00"/>
    <property type="gene ID" value="Os04g0611700"/>
</dbReference>
<dbReference type="KEGG" id="dosa:Os04g0611700"/>
<dbReference type="eggNOG" id="ENOG502QVGX">
    <property type="taxonomic scope" value="Eukaryota"/>
</dbReference>
<dbReference type="HOGENOM" id="CLU_003125_2_0_1"/>
<dbReference type="InParanoid" id="Q0JA83"/>
<dbReference type="OMA" id="DLFWKMC"/>
<dbReference type="Proteomes" id="UP000000763">
    <property type="component" value="Chromosome 4"/>
</dbReference>
<dbReference type="Proteomes" id="UP000059680">
    <property type="component" value="Chromosome 4"/>
</dbReference>
<dbReference type="GO" id="GO:0000287">
    <property type="term" value="F:magnesium ion binding"/>
    <property type="evidence" value="ECO:0000318"/>
    <property type="project" value="GO_Central"/>
</dbReference>
<dbReference type="GO" id="GO:0010333">
    <property type="term" value="F:terpene synthase activity"/>
    <property type="evidence" value="ECO:0000318"/>
    <property type="project" value="GO_Central"/>
</dbReference>
<dbReference type="GO" id="GO:0006952">
    <property type="term" value="P:defense response"/>
    <property type="evidence" value="ECO:0007669"/>
    <property type="project" value="UniProtKB-KW"/>
</dbReference>
<dbReference type="GO" id="GO:0016102">
    <property type="term" value="P:diterpenoid biosynthetic process"/>
    <property type="evidence" value="ECO:0000318"/>
    <property type="project" value="GO_Central"/>
</dbReference>
<dbReference type="CDD" id="cd00684">
    <property type="entry name" value="Terpene_cyclase_plant_C1"/>
    <property type="match status" value="1"/>
</dbReference>
<dbReference type="FunFam" id="1.50.10.160:FF:000002">
    <property type="entry name" value="cis-abienol synthase, chloroplastic"/>
    <property type="match status" value="1"/>
</dbReference>
<dbReference type="FunFam" id="1.50.10.130:FF:000003">
    <property type="entry name" value="Ent-cassa-12,15-diene synthase"/>
    <property type="match status" value="1"/>
</dbReference>
<dbReference type="FunFam" id="1.10.600.10:FF:000005">
    <property type="entry name" value="Ent-kaur-16-ene synthase, chloroplastic"/>
    <property type="match status" value="1"/>
</dbReference>
<dbReference type="Gene3D" id="1.50.10.160">
    <property type="match status" value="1"/>
</dbReference>
<dbReference type="Gene3D" id="1.10.600.10">
    <property type="entry name" value="Farnesyl Diphosphate Synthase"/>
    <property type="match status" value="1"/>
</dbReference>
<dbReference type="Gene3D" id="1.50.10.130">
    <property type="entry name" value="Terpene synthase, N-terminal domain"/>
    <property type="match status" value="1"/>
</dbReference>
<dbReference type="InterPro" id="IPR008949">
    <property type="entry name" value="Isoprenoid_synthase_dom_sf"/>
</dbReference>
<dbReference type="InterPro" id="IPR044814">
    <property type="entry name" value="Terpene_cyclase_plant_C1"/>
</dbReference>
<dbReference type="InterPro" id="IPR001906">
    <property type="entry name" value="Terpene_synth_N"/>
</dbReference>
<dbReference type="InterPro" id="IPR036965">
    <property type="entry name" value="Terpene_synth_N_sf"/>
</dbReference>
<dbReference type="InterPro" id="IPR050148">
    <property type="entry name" value="Terpene_synthase-like"/>
</dbReference>
<dbReference type="InterPro" id="IPR005630">
    <property type="entry name" value="Terpene_synthase_metal-bd"/>
</dbReference>
<dbReference type="InterPro" id="IPR008930">
    <property type="entry name" value="Terpenoid_cyclase/PrenylTrfase"/>
</dbReference>
<dbReference type="PANTHER" id="PTHR31739">
    <property type="entry name" value="ENT-COPALYL DIPHOSPHATE SYNTHASE, CHLOROPLASTIC"/>
    <property type="match status" value="1"/>
</dbReference>
<dbReference type="PANTHER" id="PTHR31739:SF16">
    <property type="entry name" value="ENT-KAURENE SYNTHASE-LIKE 3"/>
    <property type="match status" value="1"/>
</dbReference>
<dbReference type="Pfam" id="PF01397">
    <property type="entry name" value="Terpene_synth"/>
    <property type="match status" value="1"/>
</dbReference>
<dbReference type="Pfam" id="PF03936">
    <property type="entry name" value="Terpene_synth_C"/>
    <property type="match status" value="1"/>
</dbReference>
<dbReference type="SFLD" id="SFLDG01014">
    <property type="entry name" value="Terpene_Cyclase_Like_1_N-term"/>
    <property type="match status" value="1"/>
</dbReference>
<dbReference type="SUPFAM" id="SSF48239">
    <property type="entry name" value="Terpenoid cyclases/Protein prenyltransferases"/>
    <property type="match status" value="2"/>
</dbReference>
<dbReference type="SUPFAM" id="SSF48576">
    <property type="entry name" value="Terpenoid synthases"/>
    <property type="match status" value="1"/>
</dbReference>
<feature type="chain" id="PRO_0000372314" description="Ent-kaurene synthase-like 3">
    <location>
        <begin position="1"/>
        <end position="739"/>
    </location>
</feature>
<feature type="short sequence motif" description="DDXXD motif">
    <location>
        <begin position="475"/>
        <end position="479"/>
    </location>
</feature>
<feature type="binding site" evidence="1">
    <location>
        <position position="475"/>
    </location>
    <ligand>
        <name>Mg(2+)</name>
        <dbReference type="ChEBI" id="CHEBI:18420"/>
        <label>1</label>
    </ligand>
</feature>
<feature type="binding site" evidence="1">
    <location>
        <position position="475"/>
    </location>
    <ligand>
        <name>Mg(2+)</name>
        <dbReference type="ChEBI" id="CHEBI:18420"/>
        <label>2</label>
    </ligand>
</feature>
<feature type="binding site" evidence="1">
    <location>
        <position position="479"/>
    </location>
    <ligand>
        <name>Mg(2+)</name>
        <dbReference type="ChEBI" id="CHEBI:18420"/>
        <label>1</label>
    </ligand>
</feature>
<feature type="binding site" evidence="1">
    <location>
        <position position="479"/>
    </location>
    <ligand>
        <name>Mg(2+)</name>
        <dbReference type="ChEBI" id="CHEBI:18420"/>
        <label>2</label>
    </ligand>
</feature>
<feature type="binding site" evidence="1">
    <location>
        <position position="619"/>
    </location>
    <ligand>
        <name>Mg(2+)</name>
        <dbReference type="ChEBI" id="CHEBI:18420"/>
        <label>3</label>
    </ligand>
</feature>
<feature type="binding site" evidence="1">
    <location>
        <position position="623"/>
    </location>
    <ligand>
        <name>Mg(2+)</name>
        <dbReference type="ChEBI" id="CHEBI:18420"/>
        <label>3</label>
    </ligand>
</feature>
<feature type="binding site" evidence="1">
    <location>
        <position position="627"/>
    </location>
    <ligand>
        <name>Mg(2+)</name>
        <dbReference type="ChEBI" id="CHEBI:18420"/>
        <label>3</label>
    </ligand>
</feature>
<feature type="splice variant" id="VSP_037140" description="In isoform 2." evidence="3">
    <original>DELERIDSWVKENRLHELKFARQKS</original>
    <variation>ALSNRSRSCSFGCQKFQYYSIYLPG</variation>
    <location>
        <begin position="417"/>
        <end position="441"/>
    </location>
</feature>
<feature type="splice variant" id="VSP_037141" description="In isoform 2." evidence="3">
    <location>
        <begin position="442"/>
        <end position="739"/>
    </location>
</feature>
<feature type="sequence conflict" description="In Ref. 6; BAE98301." evidence="4" ref="6">
    <original>V</original>
    <variation>I</variation>
    <location>
        <position position="191"/>
    </location>
</feature>
<feature type="sequence conflict" description="In Ref. 6; BAE98301." evidence="4" ref="6">
    <original>T</original>
    <variation>I</variation>
    <location>
        <position position="371"/>
    </location>
</feature>
<feature type="sequence conflict" description="In Ref. 2; CAE05199 and 3; BAF15754." ref="2 3">
    <original>S</original>
    <variation>A</variation>
    <location>
        <position position="698"/>
    </location>
</feature>
<comment type="cofactor">
    <cofactor evidence="1">
        <name>Mg(2+)</name>
        <dbReference type="ChEBI" id="CHEBI:18420"/>
    </cofactor>
    <text evidence="1">Binds 3 Mg(2+) ions per subunit.</text>
</comment>
<comment type="alternative products">
    <event type="alternative splicing"/>
    <isoform>
        <id>Q0JA83-1</id>
        <name>1</name>
        <sequence type="displayed"/>
    </isoform>
    <isoform>
        <id>Q0JA83-2</id>
        <name>2</name>
        <sequence type="described" ref="VSP_037140 VSP_037141"/>
    </isoform>
</comment>
<comment type="tissue specificity">
    <text evidence="2">Expressed in roots and stems.</text>
</comment>
<comment type="developmental stage">
    <text evidence="2">Expressed in seeds from 2 to 6 days after imbibition.</text>
</comment>
<comment type="domain">
    <text>The Asp-Asp-Xaa-Xaa-Asp/Glu (DDXXD/E) motif is important for the catalytic activity, presumably through binding to Mg(2+).</text>
</comment>
<comment type="similarity">
    <text evidence="4">Belongs to the terpene synthase family.</text>
</comment>
<comment type="sequence caution" evidence="4">
    <conflict type="erroneous gene model prediction">
        <sequence resource="EMBL-CDS" id="CAE05199"/>
    </conflict>
</comment>
<reference key="1">
    <citation type="journal article" date="2005" name="Plant Cell Rep.">
        <title>Isolation and characterization of a Ds-tagged rice (Oryza sativa L.) GA-responsive dwarf mutant defective in an early step of the gibberellin biosynthesis pathway.</title>
        <authorList>
            <person name="Margis-Pinheiro M."/>
            <person name="Zhou X.-R."/>
            <person name="Zhu Q.-H."/>
            <person name="Dennis E.S."/>
            <person name="Upadhyaya N.M."/>
        </authorList>
    </citation>
    <scope>NUCLEOTIDE SEQUENCE [MRNA] (ISOFORM 1)</scope>
    <scope>TISSUE SPECIFICITY</scope>
    <scope>DEVELOPMENTAL STAGE</scope>
    <source>
        <strain>cv. Nipponbare</strain>
    </source>
</reference>
<reference key="2">
    <citation type="journal article" date="2002" name="Nature">
        <title>Sequence and analysis of rice chromosome 4.</title>
        <authorList>
            <person name="Feng Q."/>
            <person name="Zhang Y."/>
            <person name="Hao P."/>
            <person name="Wang S."/>
            <person name="Fu G."/>
            <person name="Huang Y."/>
            <person name="Li Y."/>
            <person name="Zhu J."/>
            <person name="Liu Y."/>
            <person name="Hu X."/>
            <person name="Jia P."/>
            <person name="Zhang Y."/>
            <person name="Zhao Q."/>
            <person name="Ying K."/>
            <person name="Yu S."/>
            <person name="Tang Y."/>
            <person name="Weng Q."/>
            <person name="Zhang L."/>
            <person name="Lu Y."/>
            <person name="Mu J."/>
            <person name="Lu Y."/>
            <person name="Zhang L.S."/>
            <person name="Yu Z."/>
            <person name="Fan D."/>
            <person name="Liu X."/>
            <person name="Lu T."/>
            <person name="Li C."/>
            <person name="Wu Y."/>
            <person name="Sun T."/>
            <person name="Lei H."/>
            <person name="Li T."/>
            <person name="Hu H."/>
            <person name="Guan J."/>
            <person name="Wu M."/>
            <person name="Zhang R."/>
            <person name="Zhou B."/>
            <person name="Chen Z."/>
            <person name="Chen L."/>
            <person name="Jin Z."/>
            <person name="Wang R."/>
            <person name="Yin H."/>
            <person name="Cai Z."/>
            <person name="Ren S."/>
            <person name="Lv G."/>
            <person name="Gu W."/>
            <person name="Zhu G."/>
            <person name="Tu Y."/>
            <person name="Jia J."/>
            <person name="Zhang Y."/>
            <person name="Chen J."/>
            <person name="Kang H."/>
            <person name="Chen X."/>
            <person name="Shao C."/>
            <person name="Sun Y."/>
            <person name="Hu Q."/>
            <person name="Zhang X."/>
            <person name="Zhang W."/>
            <person name="Wang L."/>
            <person name="Ding C."/>
            <person name="Sheng H."/>
            <person name="Gu J."/>
            <person name="Chen S."/>
            <person name="Ni L."/>
            <person name="Zhu F."/>
            <person name="Chen W."/>
            <person name="Lan L."/>
            <person name="Lai Y."/>
            <person name="Cheng Z."/>
            <person name="Gu M."/>
            <person name="Jiang J."/>
            <person name="Li J."/>
            <person name="Hong G."/>
            <person name="Xue Y."/>
            <person name="Han B."/>
        </authorList>
    </citation>
    <scope>NUCLEOTIDE SEQUENCE [LARGE SCALE GENOMIC DNA]</scope>
    <source>
        <strain>cv. Nipponbare</strain>
    </source>
</reference>
<reference key="3">
    <citation type="journal article" date="2005" name="Nature">
        <title>The map-based sequence of the rice genome.</title>
        <authorList>
            <consortium name="International rice genome sequencing project (IRGSP)"/>
        </authorList>
    </citation>
    <scope>NUCLEOTIDE SEQUENCE [LARGE SCALE GENOMIC DNA]</scope>
    <source>
        <strain>cv. Nipponbare</strain>
    </source>
</reference>
<reference key="4">
    <citation type="journal article" date="2008" name="Nucleic Acids Res.">
        <title>The rice annotation project database (RAP-DB): 2008 update.</title>
        <authorList>
            <consortium name="The rice annotation project (RAP)"/>
        </authorList>
    </citation>
    <scope>GENOME REANNOTATION</scope>
    <source>
        <strain>cv. Nipponbare</strain>
    </source>
</reference>
<reference key="5">
    <citation type="journal article" date="2013" name="Rice">
        <title>Improvement of the Oryza sativa Nipponbare reference genome using next generation sequence and optical map data.</title>
        <authorList>
            <person name="Kawahara Y."/>
            <person name="de la Bastide M."/>
            <person name="Hamilton J.P."/>
            <person name="Kanamori H."/>
            <person name="McCombie W.R."/>
            <person name="Ouyang S."/>
            <person name="Schwartz D.C."/>
            <person name="Tanaka T."/>
            <person name="Wu J."/>
            <person name="Zhou S."/>
            <person name="Childs K.L."/>
            <person name="Davidson R.M."/>
            <person name="Lin H."/>
            <person name="Quesada-Ocampo L."/>
            <person name="Vaillancourt B."/>
            <person name="Sakai H."/>
            <person name="Lee S.S."/>
            <person name="Kim J."/>
            <person name="Numa H."/>
            <person name="Itoh T."/>
            <person name="Buell C.R."/>
            <person name="Matsumoto T."/>
        </authorList>
    </citation>
    <scope>GENOME REANNOTATION</scope>
    <scope>SEQUENCE REVISION TO SER-698</scope>
    <source>
        <strain>cv. Nipponbare</strain>
    </source>
</reference>
<reference key="6">
    <citation type="journal article" date="2006" name="Biosci. Biotechnol. Biochem.">
        <title>Characterization of a rice gene family encoding type-A diterpene cyclases.</title>
        <authorList>
            <person name="Kanno Y."/>
            <person name="Otomo K."/>
            <person name="Kenmoku H."/>
            <person name="Mitsuhashi W."/>
            <person name="Yamane H."/>
            <person name="Oikawa H."/>
            <person name="Toshima H."/>
            <person name="Matsuoka M."/>
            <person name="Sassa T."/>
            <person name="Toyomasu T."/>
        </authorList>
    </citation>
    <scope>NUCLEOTIDE SEQUENCE [MRNA] OF 7-739 (ISOFORM 2)</scope>
    <source>
        <strain>cv. Nipponbare</strain>
    </source>
</reference>
<name>KSL3_ORYSJ</name>
<organism>
    <name type="scientific">Oryza sativa subsp. japonica</name>
    <name type="common">Rice</name>
    <dbReference type="NCBI Taxonomy" id="39947"/>
    <lineage>
        <taxon>Eukaryota</taxon>
        <taxon>Viridiplantae</taxon>
        <taxon>Streptophyta</taxon>
        <taxon>Embryophyta</taxon>
        <taxon>Tracheophyta</taxon>
        <taxon>Spermatophyta</taxon>
        <taxon>Magnoliopsida</taxon>
        <taxon>Liliopsida</taxon>
        <taxon>Poales</taxon>
        <taxon>Poaceae</taxon>
        <taxon>BOP clade</taxon>
        <taxon>Oryzoideae</taxon>
        <taxon>Oryzeae</taxon>
        <taxon>Oryzinae</taxon>
        <taxon>Oryza</taxon>
        <taxon>Oryza sativa</taxon>
    </lineage>
</organism>
<accession>Q0JA83</accession>
<accession>A0A0N7KJP1</accession>
<accession>Q0WYX1</accession>
<accession>Q69DS8</accession>
<accession>Q7XLE2</accession>
<gene>
    <name type="primary">KSL3</name>
    <name type="synonym">KS2</name>
    <name type="ordered locus">Os04g0611700</name>
    <name type="ordered locus">LOC_Os04g52210</name>
    <name type="ORF">OSJNBa0070C17.6</name>
</gene>
<keyword id="KW-0025">Alternative splicing</keyword>
<keyword id="KW-0456">Lyase</keyword>
<keyword id="KW-0460">Magnesium</keyword>
<keyword id="KW-0479">Metal-binding</keyword>
<keyword id="KW-0611">Plant defense</keyword>
<keyword id="KW-1185">Reference proteome</keyword>
<sequence>MFQLELVNVVMHQRKAIEDTMRKKKKQQLHKFEMLPSPYDTAWVAMVPLPGSSSQLPCFPQCVEWILQNQQSNGSWDLNQLDSITKDALLSTLACVLALRRGLLFIGRNFSIAMDEQLAAPIGFNITFPGMLSSVIEMGLEVPIGQTDVERVLHLQETELKREYEENYRGRNTYMAYVSEGLGNAQDWNEVMNFQRKNGSLFNSLSITAAVLVHNYDAKAHRYLNLLLNKFGTAVYTKNIHRQLSMLDALENMGISRHFDGEIKSILDMTYSCWLQRDEEVMLDITTCAMAFRILRMNGYDVSSDDLCHIAEVSDFHSSHQGYLSDTRTLLELYKASEVSVADNEFILDRIGSWSGRLLKEQLSSGALQRTSSIFEEVEHALDCPFYATLDRLVHKRNIEHFAAMSYISYAQNNIPDELERIDSWVKENRLHELKFARQKSAYFYLSAAGTVFDPEMSDARIWWAINGVLTTVVDDFFDVGGSREELENLISLVEMWDEHHKEELYSEQVEIVFFAIFNSVNQLGAKVSAVQGRDVTKHLIEIWLDLLRSMMTEVEWRISNYVPTPEEYMENAAMTFALGPIVLPALYLVGPKIPESVVRDSEYNELFRLMSTCGRLLNDVQTYEREDGEGKVNSVSLLVIQSGGSVSIEEARREIMKPIERCRRELLGLVLRRGSAVPGPCKELFWKMCKVCYFFYSRGDGFSSPTAKSAAVDAVIRDPLDLAAVVASQEPIYIIPAS</sequence>